<feature type="chain" id="PRO_1000069138" description="Proline--tRNA ligase">
    <location>
        <begin position="1"/>
        <end position="572"/>
    </location>
</feature>
<keyword id="KW-0030">Aminoacyl-tRNA synthetase</keyword>
<keyword id="KW-0067">ATP-binding</keyword>
<keyword id="KW-0963">Cytoplasm</keyword>
<keyword id="KW-0436">Ligase</keyword>
<keyword id="KW-0547">Nucleotide-binding</keyword>
<keyword id="KW-0648">Protein biosynthesis</keyword>
<organism>
    <name type="scientific">Enterobacter sp. (strain 638)</name>
    <dbReference type="NCBI Taxonomy" id="399742"/>
    <lineage>
        <taxon>Bacteria</taxon>
        <taxon>Pseudomonadati</taxon>
        <taxon>Pseudomonadota</taxon>
        <taxon>Gammaproteobacteria</taxon>
        <taxon>Enterobacterales</taxon>
        <taxon>Enterobacteriaceae</taxon>
        <taxon>Enterobacter</taxon>
    </lineage>
</organism>
<evidence type="ECO:0000255" key="1">
    <source>
        <dbReference type="HAMAP-Rule" id="MF_01569"/>
    </source>
</evidence>
<proteinExistence type="inferred from homology"/>
<comment type="function">
    <text evidence="1">Catalyzes the attachment of proline to tRNA(Pro) in a two-step reaction: proline is first activated by ATP to form Pro-AMP and then transferred to the acceptor end of tRNA(Pro). As ProRS can inadvertently accommodate and process non-cognate amino acids such as alanine and cysteine, to avoid such errors it has two additional distinct editing activities against alanine. One activity is designated as 'pretransfer' editing and involves the tRNA(Pro)-independent hydrolysis of activated Ala-AMP. The other activity is designated 'posttransfer' editing and involves deacylation of mischarged Ala-tRNA(Pro). The misacylated Cys-tRNA(Pro) is not edited by ProRS.</text>
</comment>
<comment type="catalytic activity">
    <reaction evidence="1">
        <text>tRNA(Pro) + L-proline + ATP = L-prolyl-tRNA(Pro) + AMP + diphosphate</text>
        <dbReference type="Rhea" id="RHEA:14305"/>
        <dbReference type="Rhea" id="RHEA-COMP:9700"/>
        <dbReference type="Rhea" id="RHEA-COMP:9702"/>
        <dbReference type="ChEBI" id="CHEBI:30616"/>
        <dbReference type="ChEBI" id="CHEBI:33019"/>
        <dbReference type="ChEBI" id="CHEBI:60039"/>
        <dbReference type="ChEBI" id="CHEBI:78442"/>
        <dbReference type="ChEBI" id="CHEBI:78532"/>
        <dbReference type="ChEBI" id="CHEBI:456215"/>
        <dbReference type="EC" id="6.1.1.15"/>
    </reaction>
</comment>
<comment type="subunit">
    <text evidence="1">Homodimer.</text>
</comment>
<comment type="subcellular location">
    <subcellularLocation>
        <location evidence="1">Cytoplasm</location>
    </subcellularLocation>
</comment>
<comment type="domain">
    <text evidence="1">Consists of three domains: the N-terminal catalytic domain, the editing domain and the C-terminal anticodon-binding domain.</text>
</comment>
<comment type="similarity">
    <text evidence="1">Belongs to the class-II aminoacyl-tRNA synthetase family. ProS type 1 subfamily.</text>
</comment>
<dbReference type="EC" id="6.1.1.15" evidence="1"/>
<dbReference type="EMBL" id="CP000653">
    <property type="protein sequence ID" value="ABP59419.1"/>
    <property type="molecule type" value="Genomic_DNA"/>
</dbReference>
<dbReference type="RefSeq" id="WP_012016140.1">
    <property type="nucleotide sequence ID" value="NC_009436.1"/>
</dbReference>
<dbReference type="SMR" id="A4W6T9"/>
<dbReference type="STRING" id="399742.Ent638_0732"/>
<dbReference type="KEGG" id="ent:Ent638_0732"/>
<dbReference type="eggNOG" id="COG0442">
    <property type="taxonomic scope" value="Bacteria"/>
</dbReference>
<dbReference type="HOGENOM" id="CLU_016739_0_0_6"/>
<dbReference type="OrthoDB" id="9809052at2"/>
<dbReference type="Proteomes" id="UP000000230">
    <property type="component" value="Chromosome"/>
</dbReference>
<dbReference type="GO" id="GO:0005829">
    <property type="term" value="C:cytosol"/>
    <property type="evidence" value="ECO:0007669"/>
    <property type="project" value="TreeGrafter"/>
</dbReference>
<dbReference type="GO" id="GO:0002161">
    <property type="term" value="F:aminoacyl-tRNA deacylase activity"/>
    <property type="evidence" value="ECO:0007669"/>
    <property type="project" value="InterPro"/>
</dbReference>
<dbReference type="GO" id="GO:0005524">
    <property type="term" value="F:ATP binding"/>
    <property type="evidence" value="ECO:0007669"/>
    <property type="project" value="UniProtKB-UniRule"/>
</dbReference>
<dbReference type="GO" id="GO:0004827">
    <property type="term" value="F:proline-tRNA ligase activity"/>
    <property type="evidence" value="ECO:0007669"/>
    <property type="project" value="UniProtKB-UniRule"/>
</dbReference>
<dbReference type="GO" id="GO:0006433">
    <property type="term" value="P:prolyl-tRNA aminoacylation"/>
    <property type="evidence" value="ECO:0007669"/>
    <property type="project" value="UniProtKB-UniRule"/>
</dbReference>
<dbReference type="CDD" id="cd04334">
    <property type="entry name" value="ProRS-INS"/>
    <property type="match status" value="1"/>
</dbReference>
<dbReference type="CDD" id="cd00861">
    <property type="entry name" value="ProRS_anticodon_short"/>
    <property type="match status" value="1"/>
</dbReference>
<dbReference type="CDD" id="cd00779">
    <property type="entry name" value="ProRS_core_prok"/>
    <property type="match status" value="1"/>
</dbReference>
<dbReference type="FunFam" id="3.30.930.10:FF:000012">
    <property type="entry name" value="Proline--tRNA ligase"/>
    <property type="match status" value="1"/>
</dbReference>
<dbReference type="FunFam" id="3.30.930.10:FF:000097">
    <property type="entry name" value="Proline--tRNA ligase"/>
    <property type="match status" value="1"/>
</dbReference>
<dbReference type="FunFam" id="3.40.50.800:FF:000006">
    <property type="entry name" value="Proline--tRNA ligase"/>
    <property type="match status" value="1"/>
</dbReference>
<dbReference type="FunFam" id="3.90.960.10:FF:000001">
    <property type="entry name" value="Proline--tRNA ligase"/>
    <property type="match status" value="1"/>
</dbReference>
<dbReference type="Gene3D" id="3.40.50.800">
    <property type="entry name" value="Anticodon-binding domain"/>
    <property type="match status" value="1"/>
</dbReference>
<dbReference type="Gene3D" id="3.30.930.10">
    <property type="entry name" value="Bira Bifunctional Protein, Domain 2"/>
    <property type="match status" value="2"/>
</dbReference>
<dbReference type="Gene3D" id="3.90.960.10">
    <property type="entry name" value="YbaK/aminoacyl-tRNA synthetase-associated domain"/>
    <property type="match status" value="1"/>
</dbReference>
<dbReference type="HAMAP" id="MF_01569">
    <property type="entry name" value="Pro_tRNA_synth_type1"/>
    <property type="match status" value="1"/>
</dbReference>
<dbReference type="InterPro" id="IPR002314">
    <property type="entry name" value="aa-tRNA-synt_IIb"/>
</dbReference>
<dbReference type="InterPro" id="IPR006195">
    <property type="entry name" value="aa-tRNA-synth_II"/>
</dbReference>
<dbReference type="InterPro" id="IPR045864">
    <property type="entry name" value="aa-tRNA-synth_II/BPL/LPL"/>
</dbReference>
<dbReference type="InterPro" id="IPR004154">
    <property type="entry name" value="Anticodon-bd"/>
</dbReference>
<dbReference type="InterPro" id="IPR036621">
    <property type="entry name" value="Anticodon-bd_dom_sf"/>
</dbReference>
<dbReference type="InterPro" id="IPR002316">
    <property type="entry name" value="Pro-tRNA-ligase_IIa"/>
</dbReference>
<dbReference type="InterPro" id="IPR004500">
    <property type="entry name" value="Pro-tRNA-synth_IIa_bac-type"/>
</dbReference>
<dbReference type="InterPro" id="IPR023717">
    <property type="entry name" value="Pro-tRNA-Synthase_IIa_type1"/>
</dbReference>
<dbReference type="InterPro" id="IPR050062">
    <property type="entry name" value="Pro-tRNA_synthetase"/>
</dbReference>
<dbReference type="InterPro" id="IPR044140">
    <property type="entry name" value="ProRS_anticodon_short"/>
</dbReference>
<dbReference type="InterPro" id="IPR033730">
    <property type="entry name" value="ProRS_core_prok"/>
</dbReference>
<dbReference type="InterPro" id="IPR036754">
    <property type="entry name" value="YbaK/aa-tRNA-synt-asso_dom_sf"/>
</dbReference>
<dbReference type="InterPro" id="IPR007214">
    <property type="entry name" value="YbaK/aa-tRNA-synth-assoc-dom"/>
</dbReference>
<dbReference type="NCBIfam" id="NF006625">
    <property type="entry name" value="PRK09194.1"/>
    <property type="match status" value="1"/>
</dbReference>
<dbReference type="NCBIfam" id="TIGR00409">
    <property type="entry name" value="proS_fam_II"/>
    <property type="match status" value="1"/>
</dbReference>
<dbReference type="PANTHER" id="PTHR42753">
    <property type="entry name" value="MITOCHONDRIAL RIBOSOME PROTEIN L39/PROLYL-TRNA LIGASE FAMILY MEMBER"/>
    <property type="match status" value="1"/>
</dbReference>
<dbReference type="PANTHER" id="PTHR42753:SF2">
    <property type="entry name" value="PROLINE--TRNA LIGASE"/>
    <property type="match status" value="1"/>
</dbReference>
<dbReference type="Pfam" id="PF03129">
    <property type="entry name" value="HGTP_anticodon"/>
    <property type="match status" value="1"/>
</dbReference>
<dbReference type="Pfam" id="PF00587">
    <property type="entry name" value="tRNA-synt_2b"/>
    <property type="match status" value="1"/>
</dbReference>
<dbReference type="Pfam" id="PF04073">
    <property type="entry name" value="tRNA_edit"/>
    <property type="match status" value="1"/>
</dbReference>
<dbReference type="PIRSF" id="PIRSF001535">
    <property type="entry name" value="ProRS_1"/>
    <property type="match status" value="1"/>
</dbReference>
<dbReference type="PRINTS" id="PR01046">
    <property type="entry name" value="TRNASYNTHPRO"/>
</dbReference>
<dbReference type="SUPFAM" id="SSF52954">
    <property type="entry name" value="Class II aaRS ABD-related"/>
    <property type="match status" value="1"/>
</dbReference>
<dbReference type="SUPFAM" id="SSF55681">
    <property type="entry name" value="Class II aaRS and biotin synthetases"/>
    <property type="match status" value="1"/>
</dbReference>
<dbReference type="SUPFAM" id="SSF55826">
    <property type="entry name" value="YbaK/ProRS associated domain"/>
    <property type="match status" value="1"/>
</dbReference>
<dbReference type="PROSITE" id="PS50862">
    <property type="entry name" value="AA_TRNA_LIGASE_II"/>
    <property type="match status" value="1"/>
</dbReference>
<reference key="1">
    <citation type="journal article" date="2010" name="PLoS Genet.">
        <title>Genome sequence of the plant growth promoting endophytic bacterium Enterobacter sp. 638.</title>
        <authorList>
            <person name="Taghavi S."/>
            <person name="van der Lelie D."/>
            <person name="Hoffman A."/>
            <person name="Zhang Y.B."/>
            <person name="Walla M.D."/>
            <person name="Vangronsveld J."/>
            <person name="Newman L."/>
            <person name="Monchy S."/>
        </authorList>
    </citation>
    <scope>NUCLEOTIDE SEQUENCE [LARGE SCALE GENOMIC DNA]</scope>
    <source>
        <strain>638</strain>
    </source>
</reference>
<protein>
    <recommendedName>
        <fullName evidence="1">Proline--tRNA ligase</fullName>
        <ecNumber evidence="1">6.1.1.15</ecNumber>
    </recommendedName>
    <alternativeName>
        <fullName evidence="1">Prolyl-tRNA synthetase</fullName>
        <shortName evidence="1">ProRS</shortName>
    </alternativeName>
</protein>
<accession>A4W6T9</accession>
<sequence length="572" mass="63568">MRTSQYLLSTLKETPADAEVISHQLMLRAGMIRKLASGLYTWLPTGLRVLKKVENIVREEMNNAGAIEVSMPVVQPADLWVESGRWEQYGPELLRFVDRGERSFVLGPTHEEVITDLIRNELNSYKQLPLNFFQIQTKFRDEVRPRFGVMRSREFLMKDSYSFHTSQESLQETYDKMYEAYSKIFSRMGLDFRAVQADTGSIGGSASHEFQVLAQSGEDDVIFSDTSDYAANIEFAEALAPSAPRAAASEEMKLVDTPNAKTIAELVEQFNLPIEKTVKTLLVKAVEGSAYPLVALLVRGDHELNEVKAEKLAQVASPLTFATEAEIRAVVNAGPGSLGPVNMPIPVVIDRTVAAMSDFSAGANIDGQHYFGINWDRDVATPEVADIRNVVAGDPSPDGQGTLMIKRGIEVGHIFQLGTKYSEALNASVQGEDGRNQILTMGCYGIGVTRVVAAAIEQNHDERGIVWPDNLAPFQVAILPMNMHKSYRVQELAEKLYSELRAQGIEVLMDDRKERPGVMFADMELIGIPHTVVIGDRNLDSDDIEYKYRRSGEKQMIKTGDILDYLVKAIKG</sequence>
<gene>
    <name evidence="1" type="primary">proS</name>
    <name type="ordered locus">Ent638_0732</name>
</gene>
<name>SYP_ENT38</name>